<sequence length="649" mass="72227">MALVTVSRSPPASGHSTPVGPTQDRVVRRRGRLQRRQSFAVLRGAVLGLQDGGDSNVASEADSEPMEEPSGEEQPTEDQTDKGQGLQSPWKQVQKRHLHLMVELLRPQDDIRLAAQLEAARPPRLRYLLVVSTGEELSEEAILLGVDFPDSSSHSCTLGLVLPLWSDTQVYLDGDGGFSVTSGGQSRIFKPVSIQTMWATLQVLHQACEVALGSGLVPGGSALAWATYYQEKLNSDQGCLNEWMAMSDLESFRPPNAEPGQASEQEKMEQAILAELWQVLDTSDLDSVTSKEIRQALELRLGCPLQQYRDFIDNQMLLLMAQQDRASRIFPHLYLGSEWNAANLEELQKNRVSHILNMAREIDNFFPERFTYYNVRVWDEESAQLLPHWKETHRFIEDARAQGTRVLVHCKMGVSRSAATVLAYAMKQYGWDLEQALIHVQELRPIVRPNHGFLRQLRTYQGILTASRQSHVWEQKVGVVSPEEPLAPEVSTPLPPLPPEPGGSGEVMVMGLEGSQETPKEELGLRPRINLRGVMRSISLLEPSESESTPEAGGLPEVFSSDEEPLHPFSQLSRAKGGQRVRKGPWPALKSRQSVVALHSAALVASRTRAFQEQGQGQEQSEPGMSSTPRLRKVMRQASVDDSREEDKA</sequence>
<comment type="function">
    <text evidence="6">Protein phosphatase which may play a role in the regulation of actin filament dynamics. Can dephosphorylate and activate the actin binding/depolymerizing factor cofilin, which subsequently binds to actin filaments and stimulates their disassembly.</text>
</comment>
<comment type="catalytic activity">
    <reaction evidence="4">
        <text>O-phospho-L-tyrosyl-[protein] + H2O = L-tyrosyl-[protein] + phosphate</text>
        <dbReference type="Rhea" id="RHEA:10684"/>
        <dbReference type="Rhea" id="RHEA-COMP:10136"/>
        <dbReference type="Rhea" id="RHEA-COMP:20101"/>
        <dbReference type="ChEBI" id="CHEBI:15377"/>
        <dbReference type="ChEBI" id="CHEBI:43474"/>
        <dbReference type="ChEBI" id="CHEBI:46858"/>
        <dbReference type="ChEBI" id="CHEBI:61978"/>
        <dbReference type="EC" id="3.1.3.48"/>
    </reaction>
</comment>
<comment type="catalytic activity">
    <reaction>
        <text>O-phospho-L-seryl-[protein] + H2O = L-seryl-[protein] + phosphate</text>
        <dbReference type="Rhea" id="RHEA:20629"/>
        <dbReference type="Rhea" id="RHEA-COMP:9863"/>
        <dbReference type="Rhea" id="RHEA-COMP:11604"/>
        <dbReference type="ChEBI" id="CHEBI:15377"/>
        <dbReference type="ChEBI" id="CHEBI:29999"/>
        <dbReference type="ChEBI" id="CHEBI:43474"/>
        <dbReference type="ChEBI" id="CHEBI:83421"/>
        <dbReference type="EC" id="3.1.3.16"/>
    </reaction>
</comment>
<comment type="catalytic activity">
    <reaction>
        <text>O-phospho-L-threonyl-[protein] + H2O = L-threonyl-[protein] + phosphate</text>
        <dbReference type="Rhea" id="RHEA:47004"/>
        <dbReference type="Rhea" id="RHEA-COMP:11060"/>
        <dbReference type="Rhea" id="RHEA-COMP:11605"/>
        <dbReference type="ChEBI" id="CHEBI:15377"/>
        <dbReference type="ChEBI" id="CHEBI:30013"/>
        <dbReference type="ChEBI" id="CHEBI:43474"/>
        <dbReference type="ChEBI" id="CHEBI:61977"/>
        <dbReference type="EC" id="3.1.3.16"/>
    </reaction>
</comment>
<comment type="subunit">
    <text>Does not bind to, or colocalize with, filamentous actin.</text>
</comment>
<comment type="subcellular location">
    <subcellularLocation>
        <location evidence="6">Cytoplasm</location>
        <location evidence="6">Cytoskeleton</location>
    </subcellularLocation>
    <subcellularLocation>
        <location evidence="6">Nucleus</location>
    </subcellularLocation>
</comment>
<comment type="alternative products">
    <event type="alternative splicing"/>
    <isoform>
        <id>Q8K330-1</id>
        <name>1</name>
        <sequence type="displayed"/>
    </isoform>
    <isoform>
        <id>Q8K330-2</id>
        <name>2</name>
        <sequence type="described" ref="VSP_016337"/>
    </isoform>
</comment>
<comment type="tissue specificity">
    <text evidence="6">Expressed in brain, small intestine and testis. Also expressed at lower levels in heart, kidney, liver, spleen and thymus.</text>
</comment>
<comment type="developmental stage">
    <text evidence="6">Expressed in the nervous system and epithelial tissues of the trachea at 14.5 dpc.</text>
</comment>
<comment type="miscellaneous">
    <text>Tyrosine phosphatase activity has not been demonstrated for this protein to date.</text>
</comment>
<comment type="similarity">
    <text evidence="8">Belongs to the protein-tyrosine phosphatase family.</text>
</comment>
<gene>
    <name type="primary">Ssh3</name>
    <name type="synonym">Ssh3l</name>
</gene>
<name>SSH3_MOUSE</name>
<dbReference type="EC" id="3.1.3.16"/>
<dbReference type="EC" id="3.1.3.48"/>
<dbReference type="EMBL" id="AB099289">
    <property type="protein sequence ID" value="BAC97812.1"/>
    <property type="molecule type" value="mRNA"/>
</dbReference>
<dbReference type="EMBL" id="BC028922">
    <property type="protein sequence ID" value="AAH28922.1"/>
    <property type="molecule type" value="mRNA"/>
</dbReference>
<dbReference type="EMBL" id="AK149880">
    <property type="protein sequence ID" value="BAE29141.1"/>
    <property type="molecule type" value="mRNA"/>
</dbReference>
<dbReference type="CCDS" id="CCDS29425.1">
    <molecule id="Q8K330-1"/>
</dbReference>
<dbReference type="RefSeq" id="NP_001361616.1">
    <molecule id="Q8K330-2"/>
    <property type="nucleotide sequence ID" value="NM_001374687.1"/>
</dbReference>
<dbReference type="RefSeq" id="NP_932781.1">
    <molecule id="Q8K330-1"/>
    <property type="nucleotide sequence ID" value="NM_198113.3"/>
</dbReference>
<dbReference type="SMR" id="Q8K330"/>
<dbReference type="FunCoup" id="Q8K330">
    <property type="interactions" value="960"/>
</dbReference>
<dbReference type="IntAct" id="Q8K330">
    <property type="interactions" value="1"/>
</dbReference>
<dbReference type="STRING" id="10090.ENSMUSP00000047718"/>
<dbReference type="GlyGen" id="Q8K330">
    <property type="glycosylation" value="1 site"/>
</dbReference>
<dbReference type="iPTMnet" id="Q8K330"/>
<dbReference type="PhosphoSitePlus" id="Q8K330"/>
<dbReference type="jPOST" id="Q8K330"/>
<dbReference type="PaxDb" id="10090-ENSMUSP00000109483"/>
<dbReference type="PeptideAtlas" id="Q8K330"/>
<dbReference type="ProteomicsDB" id="258627">
    <molecule id="Q8K330-1"/>
</dbReference>
<dbReference type="ProteomicsDB" id="258628">
    <molecule id="Q8K330-2"/>
</dbReference>
<dbReference type="Antibodypedia" id="16449">
    <property type="antibodies" value="233 antibodies from 32 providers"/>
</dbReference>
<dbReference type="DNASU" id="245857"/>
<dbReference type="Ensembl" id="ENSMUST00000037992.16">
    <molecule id="Q8K330-1"/>
    <property type="protein sequence ID" value="ENSMUSP00000047718.9"/>
    <property type="gene ID" value="ENSMUSG00000034616.18"/>
</dbReference>
<dbReference type="Ensembl" id="ENSMUST00000236794.2">
    <molecule id="Q8K330-2"/>
    <property type="protein sequence ID" value="ENSMUSP00000158486.2"/>
    <property type="gene ID" value="ENSMUSG00000034616.18"/>
</dbReference>
<dbReference type="GeneID" id="245857"/>
<dbReference type="KEGG" id="mmu:245857"/>
<dbReference type="UCSC" id="uc008fzo.2">
    <molecule id="Q8K330-1"/>
    <property type="organism name" value="mouse"/>
</dbReference>
<dbReference type="UCSC" id="uc012bgi.2">
    <molecule id="Q8K330-2"/>
    <property type="organism name" value="mouse"/>
</dbReference>
<dbReference type="AGR" id="MGI:2683546"/>
<dbReference type="CTD" id="54961"/>
<dbReference type="MGI" id="MGI:2683546">
    <property type="gene designation" value="Ssh3"/>
</dbReference>
<dbReference type="VEuPathDB" id="HostDB:ENSMUSG00000034616"/>
<dbReference type="eggNOG" id="KOG1716">
    <property type="taxonomic scope" value="Eukaryota"/>
</dbReference>
<dbReference type="GeneTree" id="ENSGT00940000160322"/>
<dbReference type="HOGENOM" id="CLU_006650_3_1_1"/>
<dbReference type="InParanoid" id="Q8K330"/>
<dbReference type="OMA" id="WATHYQE"/>
<dbReference type="PhylomeDB" id="Q8K330"/>
<dbReference type="TreeFam" id="TF319444"/>
<dbReference type="BioGRID-ORCS" id="245857">
    <property type="hits" value="1 hit in 77 CRISPR screens"/>
</dbReference>
<dbReference type="PRO" id="PR:Q8K330"/>
<dbReference type="Proteomes" id="UP000000589">
    <property type="component" value="Chromosome 19"/>
</dbReference>
<dbReference type="RNAct" id="Q8K330">
    <property type="molecule type" value="protein"/>
</dbReference>
<dbReference type="Bgee" id="ENSMUSG00000034616">
    <property type="expression patterns" value="Expressed in granulocyte and 145 other cell types or tissues"/>
</dbReference>
<dbReference type="ExpressionAtlas" id="Q8K330">
    <property type="expression patterns" value="baseline and differential"/>
</dbReference>
<dbReference type="GO" id="GO:0005737">
    <property type="term" value="C:cytoplasm"/>
    <property type="evidence" value="ECO:0007669"/>
    <property type="project" value="UniProtKB-KW"/>
</dbReference>
<dbReference type="GO" id="GO:0005856">
    <property type="term" value="C:cytoskeleton"/>
    <property type="evidence" value="ECO:0007669"/>
    <property type="project" value="UniProtKB-SubCell"/>
</dbReference>
<dbReference type="GO" id="GO:0005634">
    <property type="term" value="C:nucleus"/>
    <property type="evidence" value="ECO:0007669"/>
    <property type="project" value="UniProtKB-SubCell"/>
</dbReference>
<dbReference type="GO" id="GO:0003779">
    <property type="term" value="F:actin binding"/>
    <property type="evidence" value="ECO:0007669"/>
    <property type="project" value="InterPro"/>
</dbReference>
<dbReference type="GO" id="GO:0004722">
    <property type="term" value="F:protein serine/threonine phosphatase activity"/>
    <property type="evidence" value="ECO:0007669"/>
    <property type="project" value="UniProtKB-EC"/>
</dbReference>
<dbReference type="GO" id="GO:0004725">
    <property type="term" value="F:protein tyrosine phosphatase activity"/>
    <property type="evidence" value="ECO:0007669"/>
    <property type="project" value="UniProtKB-EC"/>
</dbReference>
<dbReference type="GO" id="GO:0030837">
    <property type="term" value="P:negative regulation of actin filament polymerization"/>
    <property type="evidence" value="ECO:0007669"/>
    <property type="project" value="InterPro"/>
</dbReference>
<dbReference type="CDD" id="cd14571">
    <property type="entry name" value="DSP_slingshot_3"/>
    <property type="match status" value="1"/>
</dbReference>
<dbReference type="FunFam" id="3.90.190.10:FF:000004">
    <property type="entry name" value="Protein phosphatase Slingshot homolog 2"/>
    <property type="match status" value="1"/>
</dbReference>
<dbReference type="Gene3D" id="3.90.190.10">
    <property type="entry name" value="Protein tyrosine phosphatase superfamily"/>
    <property type="match status" value="1"/>
</dbReference>
<dbReference type="InterPro" id="IPR014876">
    <property type="entry name" value="DEK_C"/>
</dbReference>
<dbReference type="InterPro" id="IPR000340">
    <property type="entry name" value="Dual-sp_phosphatase_cat-dom"/>
</dbReference>
<dbReference type="InterPro" id="IPR043587">
    <property type="entry name" value="Phosphatase_SSH-like"/>
</dbReference>
<dbReference type="InterPro" id="IPR029021">
    <property type="entry name" value="Prot-tyrosine_phosphatase-like"/>
</dbReference>
<dbReference type="InterPro" id="IPR016130">
    <property type="entry name" value="Tyr_Pase_AS"/>
</dbReference>
<dbReference type="InterPro" id="IPR000387">
    <property type="entry name" value="Tyr_Pase_dom"/>
</dbReference>
<dbReference type="InterPro" id="IPR020422">
    <property type="entry name" value="TYR_PHOSPHATASE_DUAL_dom"/>
</dbReference>
<dbReference type="PANTHER" id="PTHR45864:SF4">
    <property type="entry name" value="PROTEIN PHOSPHATASE SLINGSHOT HOMOLOG 3"/>
    <property type="match status" value="1"/>
</dbReference>
<dbReference type="PANTHER" id="PTHR45864">
    <property type="entry name" value="SLINGSHOT PROTEIN PHOSPHATASE HOMOLOG"/>
    <property type="match status" value="1"/>
</dbReference>
<dbReference type="Pfam" id="PF08766">
    <property type="entry name" value="DEK_C"/>
    <property type="match status" value="1"/>
</dbReference>
<dbReference type="Pfam" id="PF00782">
    <property type="entry name" value="DSPc"/>
    <property type="match status" value="1"/>
</dbReference>
<dbReference type="Pfam" id="PF23040">
    <property type="entry name" value="PH_SSH1-like_1st"/>
    <property type="match status" value="1"/>
</dbReference>
<dbReference type="SMART" id="SM00195">
    <property type="entry name" value="DSPc"/>
    <property type="match status" value="1"/>
</dbReference>
<dbReference type="SUPFAM" id="SSF52799">
    <property type="entry name" value="(Phosphotyrosine protein) phosphatases II"/>
    <property type="match status" value="1"/>
</dbReference>
<dbReference type="SUPFAM" id="SSF109715">
    <property type="entry name" value="DEK C-terminal domain"/>
    <property type="match status" value="1"/>
</dbReference>
<dbReference type="PROSITE" id="PS51998">
    <property type="entry name" value="DEK_C"/>
    <property type="match status" value="1"/>
</dbReference>
<dbReference type="PROSITE" id="PS00383">
    <property type="entry name" value="TYR_PHOSPHATASE_1"/>
    <property type="match status" value="1"/>
</dbReference>
<dbReference type="PROSITE" id="PS50056">
    <property type="entry name" value="TYR_PHOSPHATASE_2"/>
    <property type="match status" value="1"/>
</dbReference>
<dbReference type="PROSITE" id="PS50054">
    <property type="entry name" value="TYR_PHOSPHATASE_DUAL"/>
    <property type="match status" value="1"/>
</dbReference>
<keyword id="KW-0007">Acetylation</keyword>
<keyword id="KW-0025">Alternative splicing</keyword>
<keyword id="KW-0963">Cytoplasm</keyword>
<keyword id="KW-0206">Cytoskeleton</keyword>
<keyword id="KW-0378">Hydrolase</keyword>
<keyword id="KW-0539">Nucleus</keyword>
<keyword id="KW-0597">Phosphoprotein</keyword>
<keyword id="KW-0904">Protein phosphatase</keyword>
<keyword id="KW-1185">Reference proteome</keyword>
<evidence type="ECO:0000250" key="1">
    <source>
        <dbReference type="UniProtKB" id="Q8TE77"/>
    </source>
</evidence>
<evidence type="ECO:0000255" key="2">
    <source>
        <dbReference type="PROSITE-ProRule" id="PRU00160"/>
    </source>
</evidence>
<evidence type="ECO:0000255" key="3">
    <source>
        <dbReference type="PROSITE-ProRule" id="PRU01342"/>
    </source>
</evidence>
<evidence type="ECO:0000255" key="4">
    <source>
        <dbReference type="PROSITE-ProRule" id="PRU10044"/>
    </source>
</evidence>
<evidence type="ECO:0000256" key="5">
    <source>
        <dbReference type="SAM" id="MobiDB-lite"/>
    </source>
</evidence>
<evidence type="ECO:0000269" key="6">
    <source>
    </source>
</evidence>
<evidence type="ECO:0000303" key="7">
    <source>
    </source>
</evidence>
<evidence type="ECO:0000305" key="8"/>
<evidence type="ECO:0007744" key="9">
    <source>
    </source>
</evidence>
<evidence type="ECO:0007744" key="10">
    <source>
    </source>
</evidence>
<organism>
    <name type="scientific">Mus musculus</name>
    <name type="common">Mouse</name>
    <dbReference type="NCBI Taxonomy" id="10090"/>
    <lineage>
        <taxon>Eukaryota</taxon>
        <taxon>Metazoa</taxon>
        <taxon>Chordata</taxon>
        <taxon>Craniata</taxon>
        <taxon>Vertebrata</taxon>
        <taxon>Euteleostomi</taxon>
        <taxon>Mammalia</taxon>
        <taxon>Eutheria</taxon>
        <taxon>Euarchontoglires</taxon>
        <taxon>Glires</taxon>
        <taxon>Rodentia</taxon>
        <taxon>Myomorpha</taxon>
        <taxon>Muroidea</taxon>
        <taxon>Muridae</taxon>
        <taxon>Murinae</taxon>
        <taxon>Mus</taxon>
        <taxon>Mus</taxon>
    </lineage>
</organism>
<feature type="initiator methionine" description="Removed" evidence="9">
    <location>
        <position position="1"/>
    </location>
</feature>
<feature type="chain" id="PRO_0000094846" description="Protein phosphatase Slingshot homolog 3">
    <location>
        <begin position="2"/>
        <end position="649"/>
    </location>
</feature>
<feature type="domain" description="DEK-C" evidence="3">
    <location>
        <begin position="266"/>
        <end position="321"/>
    </location>
</feature>
<feature type="domain" description="Tyrosine-protein phosphatase" evidence="2">
    <location>
        <begin position="325"/>
        <end position="466"/>
    </location>
</feature>
<feature type="region of interest" description="Disordered" evidence="5">
    <location>
        <begin position="1"/>
        <end position="32"/>
    </location>
</feature>
<feature type="region of interest" description="Disordered" evidence="5">
    <location>
        <begin position="49"/>
        <end position="90"/>
    </location>
</feature>
<feature type="region of interest" description="Disordered" evidence="5">
    <location>
        <begin position="541"/>
        <end position="586"/>
    </location>
</feature>
<feature type="region of interest" description="Disordered" evidence="5">
    <location>
        <begin position="608"/>
        <end position="649"/>
    </location>
</feature>
<feature type="compositionally biased region" description="Polar residues" evidence="5">
    <location>
        <begin position="1"/>
        <end position="20"/>
    </location>
</feature>
<feature type="compositionally biased region" description="Acidic residues" evidence="5">
    <location>
        <begin position="61"/>
        <end position="78"/>
    </location>
</feature>
<feature type="compositionally biased region" description="Low complexity" evidence="5">
    <location>
        <begin position="541"/>
        <end position="551"/>
    </location>
</feature>
<feature type="compositionally biased region" description="Low complexity" evidence="5">
    <location>
        <begin position="608"/>
        <end position="627"/>
    </location>
</feature>
<feature type="compositionally biased region" description="Basic and acidic residues" evidence="5">
    <location>
        <begin position="639"/>
        <end position="649"/>
    </location>
</feature>
<feature type="active site" description="Phosphocysteine intermediate" evidence="2">
    <location>
        <position position="410"/>
    </location>
</feature>
<feature type="modified residue" description="N-acetylalanine" evidence="9">
    <location>
        <position position="2"/>
    </location>
</feature>
<feature type="modified residue" description="Phosphoserine" evidence="10">
    <location>
        <position position="9"/>
    </location>
</feature>
<feature type="modified residue" description="Phosphoserine" evidence="10">
    <location>
        <position position="38"/>
    </location>
</feature>
<feature type="modified residue" description="Phosphoserine" evidence="1">
    <location>
        <position position="88"/>
    </location>
</feature>
<feature type="splice variant" id="VSP_016337" description="In isoform 2." evidence="7">
    <original>Q</original>
    <variation>QITTR</variation>
    <location>
        <position position="261"/>
    </location>
</feature>
<feature type="mutagenesis site" description="Abrogates phosphatase activity." evidence="6">
    <original>C</original>
    <variation>S</variation>
    <location>
        <position position="410"/>
    </location>
</feature>
<feature type="sequence conflict" description="In Ref. 3; BAE29141." evidence="8" ref="3">
    <original>Q</original>
    <variation>R</variation>
    <location>
        <position position="74"/>
    </location>
</feature>
<proteinExistence type="evidence at protein level"/>
<protein>
    <recommendedName>
        <fullName>Protein phosphatase Slingshot homolog 3</fullName>
        <ecNumber>3.1.3.16</ecNumber>
        <ecNumber>3.1.3.48</ecNumber>
    </recommendedName>
    <alternativeName>
        <fullName>SSH-like protein 3</fullName>
        <shortName>SSH-3L</shortName>
        <shortName>mSSH-3L</shortName>
    </alternativeName>
</protein>
<reference key="1">
    <citation type="journal article" date="2003" name="Genes Cells">
        <title>Differential activities, subcellular distribution and tissue expression patterns of three members of Slingshot family phosphatases that dephosphorylate cofilin.</title>
        <authorList>
            <person name="Ohta Y."/>
            <person name="Kousaka K."/>
            <person name="Nagata-Ohashi K."/>
            <person name="Ohashi K."/>
            <person name="Muramoto A."/>
            <person name="Shima Y."/>
            <person name="Niwa R."/>
            <person name="Uemura T."/>
            <person name="Mizuno K."/>
        </authorList>
    </citation>
    <scope>NUCLEOTIDE SEQUENCE [MRNA] (ISOFORM 1)</scope>
    <scope>FUNCTION</scope>
    <scope>SUBCELLULAR LOCATION</scope>
    <scope>TISSUE SPECIFICITY</scope>
    <scope>DEVELOPMENTAL STAGE</scope>
    <scope>MUTAGENESIS OF CYS-410</scope>
    <source>
        <tissue>Brain</tissue>
    </source>
</reference>
<reference key="2">
    <citation type="journal article" date="2004" name="Genome Res.">
        <title>The status, quality, and expansion of the NIH full-length cDNA project: the Mammalian Gene Collection (MGC).</title>
        <authorList>
            <consortium name="The MGC Project Team"/>
        </authorList>
    </citation>
    <scope>NUCLEOTIDE SEQUENCE [LARGE SCALE MRNA] (ISOFORM 1)</scope>
    <source>
        <strain>Czech II</strain>
        <tissue>Mammary tumor</tissue>
    </source>
</reference>
<reference key="3">
    <citation type="journal article" date="2005" name="Science">
        <title>The transcriptional landscape of the mammalian genome.</title>
        <authorList>
            <person name="Carninci P."/>
            <person name="Kasukawa T."/>
            <person name="Katayama S."/>
            <person name="Gough J."/>
            <person name="Frith M.C."/>
            <person name="Maeda N."/>
            <person name="Oyama R."/>
            <person name="Ravasi T."/>
            <person name="Lenhard B."/>
            <person name="Wells C."/>
            <person name="Kodzius R."/>
            <person name="Shimokawa K."/>
            <person name="Bajic V.B."/>
            <person name="Brenner S.E."/>
            <person name="Batalov S."/>
            <person name="Forrest A.R."/>
            <person name="Zavolan M."/>
            <person name="Davis M.J."/>
            <person name="Wilming L.G."/>
            <person name="Aidinis V."/>
            <person name="Allen J.E."/>
            <person name="Ambesi-Impiombato A."/>
            <person name="Apweiler R."/>
            <person name="Aturaliya R.N."/>
            <person name="Bailey T.L."/>
            <person name="Bansal M."/>
            <person name="Baxter L."/>
            <person name="Beisel K.W."/>
            <person name="Bersano T."/>
            <person name="Bono H."/>
            <person name="Chalk A.M."/>
            <person name="Chiu K.P."/>
            <person name="Choudhary V."/>
            <person name="Christoffels A."/>
            <person name="Clutterbuck D.R."/>
            <person name="Crowe M.L."/>
            <person name="Dalla E."/>
            <person name="Dalrymple B.P."/>
            <person name="de Bono B."/>
            <person name="Della Gatta G."/>
            <person name="di Bernardo D."/>
            <person name="Down T."/>
            <person name="Engstrom P."/>
            <person name="Fagiolini M."/>
            <person name="Faulkner G."/>
            <person name="Fletcher C.F."/>
            <person name="Fukushima T."/>
            <person name="Furuno M."/>
            <person name="Futaki S."/>
            <person name="Gariboldi M."/>
            <person name="Georgii-Hemming P."/>
            <person name="Gingeras T.R."/>
            <person name="Gojobori T."/>
            <person name="Green R.E."/>
            <person name="Gustincich S."/>
            <person name="Harbers M."/>
            <person name="Hayashi Y."/>
            <person name="Hensch T.K."/>
            <person name="Hirokawa N."/>
            <person name="Hill D."/>
            <person name="Huminiecki L."/>
            <person name="Iacono M."/>
            <person name="Ikeo K."/>
            <person name="Iwama A."/>
            <person name="Ishikawa T."/>
            <person name="Jakt M."/>
            <person name="Kanapin A."/>
            <person name="Katoh M."/>
            <person name="Kawasawa Y."/>
            <person name="Kelso J."/>
            <person name="Kitamura H."/>
            <person name="Kitano H."/>
            <person name="Kollias G."/>
            <person name="Krishnan S.P."/>
            <person name="Kruger A."/>
            <person name="Kummerfeld S.K."/>
            <person name="Kurochkin I.V."/>
            <person name="Lareau L.F."/>
            <person name="Lazarevic D."/>
            <person name="Lipovich L."/>
            <person name="Liu J."/>
            <person name="Liuni S."/>
            <person name="McWilliam S."/>
            <person name="Madan Babu M."/>
            <person name="Madera M."/>
            <person name="Marchionni L."/>
            <person name="Matsuda H."/>
            <person name="Matsuzawa S."/>
            <person name="Miki H."/>
            <person name="Mignone F."/>
            <person name="Miyake S."/>
            <person name="Morris K."/>
            <person name="Mottagui-Tabar S."/>
            <person name="Mulder N."/>
            <person name="Nakano N."/>
            <person name="Nakauchi H."/>
            <person name="Ng P."/>
            <person name="Nilsson R."/>
            <person name="Nishiguchi S."/>
            <person name="Nishikawa S."/>
            <person name="Nori F."/>
            <person name="Ohara O."/>
            <person name="Okazaki Y."/>
            <person name="Orlando V."/>
            <person name="Pang K.C."/>
            <person name="Pavan W.J."/>
            <person name="Pavesi G."/>
            <person name="Pesole G."/>
            <person name="Petrovsky N."/>
            <person name="Piazza S."/>
            <person name="Reed J."/>
            <person name="Reid J.F."/>
            <person name="Ring B.Z."/>
            <person name="Ringwald M."/>
            <person name="Rost B."/>
            <person name="Ruan Y."/>
            <person name="Salzberg S.L."/>
            <person name="Sandelin A."/>
            <person name="Schneider C."/>
            <person name="Schoenbach C."/>
            <person name="Sekiguchi K."/>
            <person name="Semple C.A."/>
            <person name="Seno S."/>
            <person name="Sessa L."/>
            <person name="Sheng Y."/>
            <person name="Shibata Y."/>
            <person name="Shimada H."/>
            <person name="Shimada K."/>
            <person name="Silva D."/>
            <person name="Sinclair B."/>
            <person name="Sperling S."/>
            <person name="Stupka E."/>
            <person name="Sugiura K."/>
            <person name="Sultana R."/>
            <person name="Takenaka Y."/>
            <person name="Taki K."/>
            <person name="Tammoja K."/>
            <person name="Tan S.L."/>
            <person name="Tang S."/>
            <person name="Taylor M.S."/>
            <person name="Tegner J."/>
            <person name="Teichmann S.A."/>
            <person name="Ueda H.R."/>
            <person name="van Nimwegen E."/>
            <person name="Verardo R."/>
            <person name="Wei C.L."/>
            <person name="Yagi K."/>
            <person name="Yamanishi H."/>
            <person name="Zabarovsky E."/>
            <person name="Zhu S."/>
            <person name="Zimmer A."/>
            <person name="Hide W."/>
            <person name="Bult C."/>
            <person name="Grimmond S.M."/>
            <person name="Teasdale R.D."/>
            <person name="Liu E.T."/>
            <person name="Brusic V."/>
            <person name="Quackenbush J."/>
            <person name="Wahlestedt C."/>
            <person name="Mattick J.S."/>
            <person name="Hume D.A."/>
            <person name="Kai C."/>
            <person name="Sasaki D."/>
            <person name="Tomaru Y."/>
            <person name="Fukuda S."/>
            <person name="Kanamori-Katayama M."/>
            <person name="Suzuki M."/>
            <person name="Aoki J."/>
            <person name="Arakawa T."/>
            <person name="Iida J."/>
            <person name="Imamura K."/>
            <person name="Itoh M."/>
            <person name="Kato T."/>
            <person name="Kawaji H."/>
            <person name="Kawagashira N."/>
            <person name="Kawashima T."/>
            <person name="Kojima M."/>
            <person name="Kondo S."/>
            <person name="Konno H."/>
            <person name="Nakano K."/>
            <person name="Ninomiya N."/>
            <person name="Nishio T."/>
            <person name="Okada M."/>
            <person name="Plessy C."/>
            <person name="Shibata K."/>
            <person name="Shiraki T."/>
            <person name="Suzuki S."/>
            <person name="Tagami M."/>
            <person name="Waki K."/>
            <person name="Watahiki A."/>
            <person name="Okamura-Oho Y."/>
            <person name="Suzuki H."/>
            <person name="Kawai J."/>
            <person name="Hayashizaki Y."/>
        </authorList>
    </citation>
    <scope>NUCLEOTIDE SEQUENCE [LARGE SCALE MRNA] OF 1-582 (ISOFORM 2)</scope>
    <source>
        <strain>C57BL/6J</strain>
        <tissue>Bone marrow</tissue>
    </source>
</reference>
<reference key="4">
    <citation type="journal article" date="2007" name="Proc. Natl. Acad. Sci. U.S.A.">
        <title>Large-scale phosphorylation analysis of mouse liver.</title>
        <authorList>
            <person name="Villen J."/>
            <person name="Beausoleil S.A."/>
            <person name="Gerber S.A."/>
            <person name="Gygi S.P."/>
        </authorList>
    </citation>
    <scope>ACETYLATION [LARGE SCALE ANALYSIS] AT ALA-2</scope>
    <scope>CLEAVAGE OF INITIATOR METHIONINE [LARGE SCALE ANALYSIS]</scope>
    <scope>IDENTIFICATION BY MASS SPECTROMETRY [LARGE SCALE ANALYSIS]</scope>
    <source>
        <tissue>Liver</tissue>
    </source>
</reference>
<reference key="5">
    <citation type="journal article" date="2010" name="Cell">
        <title>A tissue-specific atlas of mouse protein phosphorylation and expression.</title>
        <authorList>
            <person name="Huttlin E.L."/>
            <person name="Jedrychowski M.P."/>
            <person name="Elias J.E."/>
            <person name="Goswami T."/>
            <person name="Rad R."/>
            <person name="Beausoleil S.A."/>
            <person name="Villen J."/>
            <person name="Haas W."/>
            <person name="Sowa M.E."/>
            <person name="Gygi S.P."/>
        </authorList>
    </citation>
    <scope>PHOSPHORYLATION [LARGE SCALE ANALYSIS] AT SER-9 AND SER-38</scope>
    <scope>IDENTIFICATION BY MASS SPECTROMETRY [LARGE SCALE ANALYSIS]</scope>
    <source>
        <tissue>Brain</tissue>
        <tissue>Kidney</tissue>
        <tissue>Lung</tissue>
        <tissue>Spleen</tissue>
        <tissue>Testis</tissue>
    </source>
</reference>
<accession>Q8K330</accession>
<accession>Q3UDX0</accession>